<accession>A9KY04</accession>
<comment type="similarity">
    <text evidence="2">Belongs to the UPF0758 family.</text>
</comment>
<organism>
    <name type="scientific">Shewanella baltica (strain OS195)</name>
    <dbReference type="NCBI Taxonomy" id="399599"/>
    <lineage>
        <taxon>Bacteria</taxon>
        <taxon>Pseudomonadati</taxon>
        <taxon>Pseudomonadota</taxon>
        <taxon>Gammaproteobacteria</taxon>
        <taxon>Alteromonadales</taxon>
        <taxon>Shewanellaceae</taxon>
        <taxon>Shewanella</taxon>
    </lineage>
</organism>
<keyword id="KW-0378">Hydrolase</keyword>
<keyword id="KW-0479">Metal-binding</keyword>
<keyword id="KW-0482">Metalloprotease</keyword>
<keyword id="KW-0645">Protease</keyword>
<keyword id="KW-0862">Zinc</keyword>
<dbReference type="EMBL" id="CP000891">
    <property type="protein sequence ID" value="ABX47569.1"/>
    <property type="molecule type" value="Genomic_DNA"/>
</dbReference>
<dbReference type="SMR" id="A9KY04"/>
<dbReference type="KEGG" id="sbn:Sbal195_0388"/>
<dbReference type="HOGENOM" id="CLU_073529_0_1_6"/>
<dbReference type="Proteomes" id="UP000000770">
    <property type="component" value="Chromosome"/>
</dbReference>
<dbReference type="GO" id="GO:0046872">
    <property type="term" value="F:metal ion binding"/>
    <property type="evidence" value="ECO:0007669"/>
    <property type="project" value="UniProtKB-KW"/>
</dbReference>
<dbReference type="GO" id="GO:0008237">
    <property type="term" value="F:metallopeptidase activity"/>
    <property type="evidence" value="ECO:0007669"/>
    <property type="project" value="UniProtKB-KW"/>
</dbReference>
<dbReference type="GO" id="GO:0006508">
    <property type="term" value="P:proteolysis"/>
    <property type="evidence" value="ECO:0007669"/>
    <property type="project" value="UniProtKB-KW"/>
</dbReference>
<dbReference type="CDD" id="cd08071">
    <property type="entry name" value="MPN_DUF2466"/>
    <property type="match status" value="1"/>
</dbReference>
<dbReference type="FunFam" id="3.40.140.10:FF:000032">
    <property type="entry name" value="DNA repair protein RadC"/>
    <property type="match status" value="1"/>
</dbReference>
<dbReference type="Gene3D" id="3.40.140.10">
    <property type="entry name" value="Cytidine Deaminase, domain 2"/>
    <property type="match status" value="1"/>
</dbReference>
<dbReference type="InterPro" id="IPR037518">
    <property type="entry name" value="MPN"/>
</dbReference>
<dbReference type="InterPro" id="IPR025657">
    <property type="entry name" value="RadC_JAB"/>
</dbReference>
<dbReference type="InterPro" id="IPR010994">
    <property type="entry name" value="RuvA_2-like"/>
</dbReference>
<dbReference type="InterPro" id="IPR001405">
    <property type="entry name" value="UPF0758"/>
</dbReference>
<dbReference type="InterPro" id="IPR020891">
    <property type="entry name" value="UPF0758_CS"/>
</dbReference>
<dbReference type="InterPro" id="IPR046778">
    <property type="entry name" value="UPF0758_N"/>
</dbReference>
<dbReference type="NCBIfam" id="NF000642">
    <property type="entry name" value="PRK00024.1"/>
    <property type="match status" value="1"/>
</dbReference>
<dbReference type="NCBIfam" id="TIGR00608">
    <property type="entry name" value="radc"/>
    <property type="match status" value="1"/>
</dbReference>
<dbReference type="PANTHER" id="PTHR30471">
    <property type="entry name" value="DNA REPAIR PROTEIN RADC"/>
    <property type="match status" value="1"/>
</dbReference>
<dbReference type="PANTHER" id="PTHR30471:SF3">
    <property type="entry name" value="UPF0758 PROTEIN YEES-RELATED"/>
    <property type="match status" value="1"/>
</dbReference>
<dbReference type="Pfam" id="PF04002">
    <property type="entry name" value="RadC"/>
    <property type="match status" value="1"/>
</dbReference>
<dbReference type="Pfam" id="PF20582">
    <property type="entry name" value="UPF0758_N"/>
    <property type="match status" value="1"/>
</dbReference>
<dbReference type="SUPFAM" id="SSF102712">
    <property type="entry name" value="JAB1/MPN domain"/>
    <property type="match status" value="1"/>
</dbReference>
<dbReference type="SUPFAM" id="SSF47781">
    <property type="entry name" value="RuvA domain 2-like"/>
    <property type="match status" value="1"/>
</dbReference>
<dbReference type="PROSITE" id="PS50249">
    <property type="entry name" value="MPN"/>
    <property type="match status" value="1"/>
</dbReference>
<dbReference type="PROSITE" id="PS01302">
    <property type="entry name" value="UPF0758"/>
    <property type="match status" value="1"/>
</dbReference>
<name>Y388_SHEB9</name>
<gene>
    <name type="ordered locus">Sbal195_0388</name>
</gene>
<sequence>MGIKDWPEGEGPRDKLLQKGAGQLSDAELLAVLLRNGLAGLNAVDLARSLISEFGGLRNLLCAPRNQVCRLPGVGPVKYAQLQAAAELARRVAQENLQRGQVLTNPDLTRDYLMRQLADRSYEVFAVLLLDSQHRVIQFVELFRGTIDSASVYPREVVSLVLEKKAAAVIVCHNHPSGIAEPSQADRRITERLKNALATIDVSLLDHMVVGDREIVSFAERGWIN</sequence>
<reference key="1">
    <citation type="submission" date="2007-11" db="EMBL/GenBank/DDBJ databases">
        <title>Complete sequence of chromosome of Shewanella baltica OS195.</title>
        <authorList>
            <consortium name="US DOE Joint Genome Institute"/>
            <person name="Copeland A."/>
            <person name="Lucas S."/>
            <person name="Lapidus A."/>
            <person name="Barry K."/>
            <person name="Glavina del Rio T."/>
            <person name="Dalin E."/>
            <person name="Tice H."/>
            <person name="Pitluck S."/>
            <person name="Chain P."/>
            <person name="Malfatti S."/>
            <person name="Shin M."/>
            <person name="Vergez L."/>
            <person name="Schmutz J."/>
            <person name="Larimer F."/>
            <person name="Land M."/>
            <person name="Hauser L."/>
            <person name="Kyrpides N."/>
            <person name="Kim E."/>
            <person name="Brettar I."/>
            <person name="Rodrigues J."/>
            <person name="Konstantinidis K."/>
            <person name="Klappenbach J."/>
            <person name="Hofle M."/>
            <person name="Tiedje J."/>
            <person name="Richardson P."/>
        </authorList>
    </citation>
    <scope>NUCLEOTIDE SEQUENCE [LARGE SCALE GENOMIC DNA]</scope>
    <source>
        <strain>OS195</strain>
    </source>
</reference>
<evidence type="ECO:0000255" key="1">
    <source>
        <dbReference type="PROSITE-ProRule" id="PRU01182"/>
    </source>
</evidence>
<evidence type="ECO:0000305" key="2"/>
<feature type="chain" id="PRO_1000074151" description="UPF0758 protein Sbal195_0388">
    <location>
        <begin position="1"/>
        <end position="225"/>
    </location>
</feature>
<feature type="domain" description="MPN" evidence="1">
    <location>
        <begin position="102"/>
        <end position="224"/>
    </location>
</feature>
<feature type="short sequence motif" description="JAMM motif" evidence="1">
    <location>
        <begin position="173"/>
        <end position="186"/>
    </location>
</feature>
<feature type="binding site" evidence="1">
    <location>
        <position position="173"/>
    </location>
    <ligand>
        <name>Zn(2+)</name>
        <dbReference type="ChEBI" id="CHEBI:29105"/>
        <note>catalytic</note>
    </ligand>
</feature>
<feature type="binding site" evidence="1">
    <location>
        <position position="175"/>
    </location>
    <ligand>
        <name>Zn(2+)</name>
        <dbReference type="ChEBI" id="CHEBI:29105"/>
        <note>catalytic</note>
    </ligand>
</feature>
<feature type="binding site" evidence="1">
    <location>
        <position position="186"/>
    </location>
    <ligand>
        <name>Zn(2+)</name>
        <dbReference type="ChEBI" id="CHEBI:29105"/>
        <note>catalytic</note>
    </ligand>
</feature>
<proteinExistence type="inferred from homology"/>
<protein>
    <recommendedName>
        <fullName>UPF0758 protein Sbal195_0388</fullName>
    </recommendedName>
</protein>